<name>CHO2_LODEL</name>
<gene>
    <name type="primary">CHO2</name>
    <name type="ORF">LELG_00214</name>
</gene>
<organism>
    <name type="scientific">Lodderomyces elongisporus (strain ATCC 11503 / CBS 2605 / JCM 1781 / NBRC 1676 / NRRL YB-4239)</name>
    <name type="common">Yeast</name>
    <name type="synonym">Saccharomyces elongisporus</name>
    <dbReference type="NCBI Taxonomy" id="379508"/>
    <lineage>
        <taxon>Eukaryota</taxon>
        <taxon>Fungi</taxon>
        <taxon>Dikarya</taxon>
        <taxon>Ascomycota</taxon>
        <taxon>Saccharomycotina</taxon>
        <taxon>Pichiomycetes</taxon>
        <taxon>Debaryomycetaceae</taxon>
        <taxon>Candida/Lodderomyces clade</taxon>
        <taxon>Lodderomyces</taxon>
    </lineage>
</organism>
<evidence type="ECO:0000255" key="1">
    <source>
        <dbReference type="HAMAP-Rule" id="MF_03217"/>
    </source>
</evidence>
<protein>
    <recommendedName>
        <fullName evidence="1">Phosphatidylethanolamine N-methyltransferase</fullName>
        <shortName evidence="1">PE methyltransferase</shortName>
        <shortName evidence="1">PEAMT</shortName>
        <shortName evidence="1">PEMT</shortName>
        <ecNumber evidence="1">2.1.1.17</ecNumber>
    </recommendedName>
</protein>
<comment type="function">
    <text evidence="1">Catalyzes the first step of the methylation pathway of phosphatidylcholine biosynthesis, the SAM-dependent methylation of phosphatidylethanolamine (PE) to phosphatidylmonomethylethanolamine (PMME).</text>
</comment>
<comment type="catalytic activity">
    <reaction evidence="1">
        <text>a 1,2-diacyl-sn-glycero-3-phosphoethanolamine + S-adenosyl-L-methionine = a 1,2-diacyl-sn-glycero-3-phospho-N-methylethanolamine + S-adenosyl-L-homocysteine + H(+)</text>
        <dbReference type="Rhea" id="RHEA:11164"/>
        <dbReference type="ChEBI" id="CHEBI:15378"/>
        <dbReference type="ChEBI" id="CHEBI:57856"/>
        <dbReference type="ChEBI" id="CHEBI:59789"/>
        <dbReference type="ChEBI" id="CHEBI:64573"/>
        <dbReference type="ChEBI" id="CHEBI:64612"/>
        <dbReference type="EC" id="2.1.1.17"/>
    </reaction>
</comment>
<comment type="pathway">
    <text evidence="1">Phospholipid metabolism; phosphatidylcholine biosynthesis.</text>
</comment>
<comment type="subcellular location">
    <subcellularLocation>
        <location evidence="1">Endoplasmic reticulum membrane</location>
        <topology evidence="1">Multi-pass membrane protein</topology>
    </subcellularLocation>
</comment>
<comment type="similarity">
    <text evidence="1">Belongs to the class VI-like SAM-binding methyltransferase superfamily. CHO2 family.</text>
</comment>
<dbReference type="EC" id="2.1.1.17" evidence="1"/>
<dbReference type="EMBL" id="CH981524">
    <property type="protein sequence ID" value="EDK42036.1"/>
    <property type="molecule type" value="Genomic_DNA"/>
</dbReference>
<dbReference type="RefSeq" id="XP_001527694.1">
    <property type="nucleotide sequence ID" value="XM_001527644.1"/>
</dbReference>
<dbReference type="FunCoup" id="A5DS78">
    <property type="interactions" value="63"/>
</dbReference>
<dbReference type="STRING" id="379508.A5DS78"/>
<dbReference type="GeneID" id="5234807"/>
<dbReference type="KEGG" id="lel:PVL30_000208"/>
<dbReference type="VEuPathDB" id="FungiDB:LELG_00214"/>
<dbReference type="eggNOG" id="ENOG502QRGH">
    <property type="taxonomic scope" value="Eukaryota"/>
</dbReference>
<dbReference type="HOGENOM" id="CLU_005987_0_1_1"/>
<dbReference type="InParanoid" id="A5DS78"/>
<dbReference type="OMA" id="RIWYSVG"/>
<dbReference type="OrthoDB" id="4583at2759"/>
<dbReference type="UniPathway" id="UPA00753"/>
<dbReference type="Proteomes" id="UP000001996">
    <property type="component" value="Unassembled WGS sequence"/>
</dbReference>
<dbReference type="GO" id="GO:0005789">
    <property type="term" value="C:endoplasmic reticulum membrane"/>
    <property type="evidence" value="ECO:0007669"/>
    <property type="project" value="UniProtKB-SubCell"/>
</dbReference>
<dbReference type="GO" id="GO:0004608">
    <property type="term" value="F:phosphatidylethanolamine N-methyltransferase activity"/>
    <property type="evidence" value="ECO:0007669"/>
    <property type="project" value="UniProtKB-UniRule"/>
</dbReference>
<dbReference type="GO" id="GO:0032259">
    <property type="term" value="P:methylation"/>
    <property type="evidence" value="ECO:0007669"/>
    <property type="project" value="UniProtKB-KW"/>
</dbReference>
<dbReference type="GO" id="GO:0006656">
    <property type="term" value="P:phosphatidylcholine biosynthetic process"/>
    <property type="evidence" value="ECO:0007669"/>
    <property type="project" value="UniProtKB-UniRule"/>
</dbReference>
<dbReference type="FunFam" id="1.20.120.1630:FF:000016">
    <property type="entry name" value="Phosphatidylethanolamine N-methyltransferase"/>
    <property type="match status" value="1"/>
</dbReference>
<dbReference type="Gene3D" id="1.20.120.1630">
    <property type="match status" value="1"/>
</dbReference>
<dbReference type="HAMAP" id="MF_03217">
    <property type="entry name" value="PEMT"/>
    <property type="match status" value="1"/>
</dbReference>
<dbReference type="InterPro" id="IPR007318">
    <property type="entry name" value="Phopholipid_MeTrfase"/>
</dbReference>
<dbReference type="InterPro" id="IPR016219">
    <property type="entry name" value="Phosphatid-EA_MeTrfase_fun"/>
</dbReference>
<dbReference type="PANTHER" id="PTHR32138">
    <property type="entry name" value="PHOSPHATIDYLETHANOLAMINE N-METHYLTRANSFERASE"/>
    <property type="match status" value="1"/>
</dbReference>
<dbReference type="PANTHER" id="PTHR32138:SF0">
    <property type="entry name" value="PHOSPHATIDYLETHANOLAMINE N-METHYLTRANSFERASE"/>
    <property type="match status" value="1"/>
</dbReference>
<dbReference type="Pfam" id="PF04191">
    <property type="entry name" value="PEMT"/>
    <property type="match status" value="2"/>
</dbReference>
<dbReference type="PIRSF" id="PIRSF000383">
    <property type="entry name" value="PEAMT"/>
    <property type="match status" value="1"/>
</dbReference>
<dbReference type="PROSITE" id="PS50244">
    <property type="entry name" value="S5A_REDUCTASE"/>
    <property type="match status" value="1"/>
</dbReference>
<dbReference type="PROSITE" id="PS51598">
    <property type="entry name" value="SAM_CHO2"/>
    <property type="match status" value="1"/>
</dbReference>
<accession>A5DS78</accession>
<reference key="1">
    <citation type="journal article" date="2009" name="Nature">
        <title>Evolution of pathogenicity and sexual reproduction in eight Candida genomes.</title>
        <authorList>
            <person name="Butler G."/>
            <person name="Rasmussen M.D."/>
            <person name="Lin M.F."/>
            <person name="Santos M.A.S."/>
            <person name="Sakthikumar S."/>
            <person name="Munro C.A."/>
            <person name="Rheinbay E."/>
            <person name="Grabherr M."/>
            <person name="Forche A."/>
            <person name="Reedy J.L."/>
            <person name="Agrafioti I."/>
            <person name="Arnaud M.B."/>
            <person name="Bates S."/>
            <person name="Brown A.J.P."/>
            <person name="Brunke S."/>
            <person name="Costanzo M.C."/>
            <person name="Fitzpatrick D.A."/>
            <person name="de Groot P.W.J."/>
            <person name="Harris D."/>
            <person name="Hoyer L.L."/>
            <person name="Hube B."/>
            <person name="Klis F.M."/>
            <person name="Kodira C."/>
            <person name="Lennard N."/>
            <person name="Logue M.E."/>
            <person name="Martin R."/>
            <person name="Neiman A.M."/>
            <person name="Nikolaou E."/>
            <person name="Quail M.A."/>
            <person name="Quinn J."/>
            <person name="Santos M.C."/>
            <person name="Schmitzberger F.F."/>
            <person name="Sherlock G."/>
            <person name="Shah P."/>
            <person name="Silverstein K.A.T."/>
            <person name="Skrzypek M.S."/>
            <person name="Soll D."/>
            <person name="Staggs R."/>
            <person name="Stansfield I."/>
            <person name="Stumpf M.P.H."/>
            <person name="Sudbery P.E."/>
            <person name="Srikantha T."/>
            <person name="Zeng Q."/>
            <person name="Berman J."/>
            <person name="Berriman M."/>
            <person name="Heitman J."/>
            <person name="Gow N.A.R."/>
            <person name="Lorenz M.C."/>
            <person name="Birren B.W."/>
            <person name="Kellis M."/>
            <person name="Cuomo C.A."/>
        </authorList>
    </citation>
    <scope>NUCLEOTIDE SEQUENCE [LARGE SCALE GENOMIC DNA]</scope>
    <source>
        <strain>ATCC 11503 / BCRC 21390 / CBS 2605 / JCM 1781 / NBRC 1676 / NRRL YB-4239</strain>
    </source>
</reference>
<sequence length="883" mass="101697">MTTTQLNSPQMSDTSLSSAEEKQGSLSAIKLQLEAQLHAQLQAQLQAQLQEWLGPKGVTFSGETFIVPETHDMVKTLFDPTLHKSNFELIILACLFANLVVFAIPLNQVRTLVFIGLYVFWRLSYNFGIGYLLQQQSLHNRLVDWAKEGKLFDEKNKLFWAQFVQHEVKSQRGKDYAINSLPIEFNTWLVFRKFVDLILMSDFITFCCVVYTCAVENASDFTNHWLVWSRVLTGIGLILFNLWVKVNAHNTIKDYAWYWGDFFFRQINNEELIFDGVFEMVPHPMYSVGYVGYYGFALIAKSYTVLAIAIFGHFLQMIFLHYIENPHIDKIYGPSKNEINLIKILKLKDLKSFDNMPPLVGLYNFNWMRSSDLLNLLLVATYAVILPLFSQSTTQYFALTVTTKLIESFGISTLLVLQSYSKYFTKWCLSNDIPVEKSLNNWAVMYNTLINLTYSSLFGLNLMYFLRGSADLLYHDLLYLRIFIGTLLIFTQTWINASIIDLIGYFGWFYGDFFIPKSQSFANHLTKAGVYRYLNNPEQIFGVCGVMGVFIIWPTFENLTCCVLWVLSNFIRINFIEKWHMIRLYGEQEVNQDSGVTKTFKKHLIPEVIQRKISGDEPLRRRPSSPSLADSLDTFIKELTNSKTKLSQQKLVELSQNLSFANSNYKLTIEGLKYNDLKTAKFATLGSPLKVIWQSPLATHSSKDWIGLYRIINTTYSRNRTILSSAGRWTYCPDANGSYVFARNKLFWEEGVYEFRYHLDGKHDVAYISEPFELKHESVSVPLHDDEVEVFALALKEKIFDRLLDIESTTVPIAQVATSQTDNVLATYQLLSSVISTSTKVQISSKIFLKSDQITILDVARKLYDINKVLDELSYDLSIKKDE</sequence>
<proteinExistence type="inferred from homology"/>
<keyword id="KW-0256">Endoplasmic reticulum</keyword>
<keyword id="KW-0444">Lipid biosynthesis</keyword>
<keyword id="KW-0443">Lipid metabolism</keyword>
<keyword id="KW-0472">Membrane</keyword>
<keyword id="KW-0489">Methyltransferase</keyword>
<keyword id="KW-0594">Phospholipid biosynthesis</keyword>
<keyword id="KW-1208">Phospholipid metabolism</keyword>
<keyword id="KW-1185">Reference proteome</keyword>
<keyword id="KW-0949">S-adenosyl-L-methionine</keyword>
<keyword id="KW-0808">Transferase</keyword>
<keyword id="KW-0812">Transmembrane</keyword>
<keyword id="KW-1133">Transmembrane helix</keyword>
<feature type="chain" id="PRO_0000405894" description="Phosphatidylethanolamine N-methyltransferase">
    <location>
        <begin position="1"/>
        <end position="883"/>
    </location>
</feature>
<feature type="topological domain" description="Lumenal" evidence="1">
    <location>
        <begin position="1"/>
        <end position="85"/>
    </location>
</feature>
<feature type="transmembrane region" description="Helical" evidence="1">
    <location>
        <begin position="86"/>
        <end position="106"/>
    </location>
</feature>
<feature type="topological domain" description="Cytoplasmic" evidence="1">
    <location>
        <begin position="107"/>
        <end position="111"/>
    </location>
</feature>
<feature type="transmembrane region" description="Helical" evidence="1">
    <location>
        <begin position="112"/>
        <end position="132"/>
    </location>
</feature>
<feature type="topological domain" description="Lumenal" evidence="1">
    <location>
        <begin position="133"/>
        <end position="193"/>
    </location>
</feature>
<feature type="transmembrane region" description="Helical" evidence="1">
    <location>
        <begin position="194"/>
        <end position="214"/>
    </location>
</feature>
<feature type="topological domain" description="Cytoplasmic" evidence="1">
    <location>
        <begin position="215"/>
        <end position="223"/>
    </location>
</feature>
<feature type="transmembrane region" description="Helical" evidence="1">
    <location>
        <begin position="224"/>
        <end position="244"/>
    </location>
</feature>
<feature type="topological domain" description="Lumenal" evidence="1">
    <location>
        <begin position="245"/>
        <end position="279"/>
    </location>
</feature>
<feature type="transmembrane region" description="Helical" evidence="1">
    <location>
        <begin position="280"/>
        <end position="300"/>
    </location>
</feature>
<feature type="topological domain" description="Cytoplasmic" evidence="1">
    <location>
        <begin position="301"/>
        <end position="302"/>
    </location>
</feature>
<feature type="transmembrane region" description="Helical" evidence="1">
    <location>
        <begin position="303"/>
        <end position="323"/>
    </location>
</feature>
<feature type="topological domain" description="Lumenal" evidence="1">
    <location>
        <begin position="324"/>
        <end position="372"/>
    </location>
</feature>
<feature type="transmembrane region" description="Helical" evidence="1">
    <location>
        <begin position="373"/>
        <end position="393"/>
    </location>
</feature>
<feature type="topological domain" description="Cytoplasmic" evidence="1">
    <location>
        <begin position="394"/>
        <end position="396"/>
    </location>
</feature>
<feature type="transmembrane region" description="Helical" evidence="1">
    <location>
        <begin position="397"/>
        <end position="417"/>
    </location>
</feature>
<feature type="topological domain" description="Lumenal" evidence="1">
    <location>
        <begin position="418"/>
        <end position="441"/>
    </location>
</feature>
<feature type="transmembrane region" description="Helical" evidence="1">
    <location>
        <begin position="442"/>
        <end position="462"/>
    </location>
</feature>
<feature type="topological domain" description="Cytoplasmic" evidence="1">
    <location>
        <begin position="463"/>
        <end position="469"/>
    </location>
</feature>
<feature type="transmembrane region" description="Helical" evidence="1">
    <location>
        <begin position="470"/>
        <end position="490"/>
    </location>
</feature>
<feature type="topological domain" description="Lumenal" evidence="1">
    <location>
        <begin position="491"/>
        <end position="539"/>
    </location>
</feature>
<feature type="transmembrane region" description="Helical" evidence="1">
    <location>
        <begin position="540"/>
        <end position="560"/>
    </location>
</feature>
<feature type="topological domain" description="Cytoplasmic" evidence="1">
    <location>
        <begin position="561"/>
        <end position="883"/>
    </location>
</feature>